<evidence type="ECO:0000255" key="1">
    <source>
        <dbReference type="HAMAP-Rule" id="MF_00436"/>
    </source>
</evidence>
<evidence type="ECO:0000255" key="2">
    <source>
        <dbReference type="PROSITE-ProRule" id="PRU01346"/>
    </source>
</evidence>
<feature type="chain" id="PRO_0000265173" description="RNA-binding protein Hfq">
    <location>
        <begin position="1"/>
        <end position="86"/>
    </location>
</feature>
<feature type="domain" description="Sm" evidence="2">
    <location>
        <begin position="9"/>
        <end position="68"/>
    </location>
</feature>
<sequence length="86" mass="9441">MSKGHSLQDPYLNTLRKEKVGVSIYLVNGIKLQGTIESFDQFVILLKNTVSQMVYKHAISTVVPVRPIRLPSASESEQGDAEPGNA</sequence>
<dbReference type="EMBL" id="CP000076">
    <property type="protein sequence ID" value="AAY95975.1"/>
    <property type="molecule type" value="Genomic_DNA"/>
</dbReference>
<dbReference type="RefSeq" id="WP_007921378.1">
    <property type="nucleotide sequence ID" value="NC_004129.6"/>
</dbReference>
<dbReference type="SMR" id="Q4KJ73"/>
<dbReference type="STRING" id="220664.PFL_0566"/>
<dbReference type="GeneID" id="93401145"/>
<dbReference type="KEGG" id="pfl:PFL_0566"/>
<dbReference type="eggNOG" id="COG1923">
    <property type="taxonomic scope" value="Bacteria"/>
</dbReference>
<dbReference type="HOGENOM" id="CLU_113688_2_2_6"/>
<dbReference type="Proteomes" id="UP000008540">
    <property type="component" value="Chromosome"/>
</dbReference>
<dbReference type="GO" id="GO:0005829">
    <property type="term" value="C:cytosol"/>
    <property type="evidence" value="ECO:0007669"/>
    <property type="project" value="TreeGrafter"/>
</dbReference>
<dbReference type="GO" id="GO:0003723">
    <property type="term" value="F:RNA binding"/>
    <property type="evidence" value="ECO:0007669"/>
    <property type="project" value="UniProtKB-UniRule"/>
</dbReference>
<dbReference type="GO" id="GO:0006355">
    <property type="term" value="P:regulation of DNA-templated transcription"/>
    <property type="evidence" value="ECO:0007669"/>
    <property type="project" value="InterPro"/>
</dbReference>
<dbReference type="GO" id="GO:0043487">
    <property type="term" value="P:regulation of RNA stability"/>
    <property type="evidence" value="ECO:0007669"/>
    <property type="project" value="TreeGrafter"/>
</dbReference>
<dbReference type="GO" id="GO:0045974">
    <property type="term" value="P:regulation of translation, ncRNA-mediated"/>
    <property type="evidence" value="ECO:0007669"/>
    <property type="project" value="TreeGrafter"/>
</dbReference>
<dbReference type="CDD" id="cd01716">
    <property type="entry name" value="Hfq"/>
    <property type="match status" value="1"/>
</dbReference>
<dbReference type="FunFam" id="2.30.30.100:FF:000001">
    <property type="entry name" value="RNA-binding protein Hfq"/>
    <property type="match status" value="1"/>
</dbReference>
<dbReference type="Gene3D" id="2.30.30.100">
    <property type="match status" value="1"/>
</dbReference>
<dbReference type="HAMAP" id="MF_00436">
    <property type="entry name" value="Hfq"/>
    <property type="match status" value="1"/>
</dbReference>
<dbReference type="InterPro" id="IPR005001">
    <property type="entry name" value="Hfq"/>
</dbReference>
<dbReference type="InterPro" id="IPR010920">
    <property type="entry name" value="LSM_dom_sf"/>
</dbReference>
<dbReference type="InterPro" id="IPR047575">
    <property type="entry name" value="Sm"/>
</dbReference>
<dbReference type="NCBIfam" id="TIGR02383">
    <property type="entry name" value="Hfq"/>
    <property type="match status" value="1"/>
</dbReference>
<dbReference type="NCBIfam" id="NF001602">
    <property type="entry name" value="PRK00395.1"/>
    <property type="match status" value="1"/>
</dbReference>
<dbReference type="PANTHER" id="PTHR34772">
    <property type="entry name" value="RNA-BINDING PROTEIN HFQ"/>
    <property type="match status" value="1"/>
</dbReference>
<dbReference type="PANTHER" id="PTHR34772:SF1">
    <property type="entry name" value="RNA-BINDING PROTEIN HFQ"/>
    <property type="match status" value="1"/>
</dbReference>
<dbReference type="Pfam" id="PF17209">
    <property type="entry name" value="Hfq"/>
    <property type="match status" value="1"/>
</dbReference>
<dbReference type="SUPFAM" id="SSF50182">
    <property type="entry name" value="Sm-like ribonucleoproteins"/>
    <property type="match status" value="1"/>
</dbReference>
<dbReference type="PROSITE" id="PS52002">
    <property type="entry name" value="SM"/>
    <property type="match status" value="1"/>
</dbReference>
<accession>Q4KJ73</accession>
<comment type="function">
    <text evidence="1">RNA chaperone that binds small regulatory RNA (sRNAs) and mRNAs to facilitate mRNA translational regulation in response to envelope stress, environmental stress and changes in metabolite concentrations. Also binds with high specificity to tRNAs.</text>
</comment>
<comment type="subunit">
    <text evidence="1">Homohexamer.</text>
</comment>
<comment type="similarity">
    <text evidence="1">Belongs to the Hfq family.</text>
</comment>
<name>HFQ_PSEF5</name>
<proteinExistence type="inferred from homology"/>
<gene>
    <name evidence="1" type="primary">hfq</name>
    <name type="ordered locus">PFL_0566</name>
</gene>
<reference key="1">
    <citation type="journal article" date="2005" name="Nat. Biotechnol.">
        <title>Complete genome sequence of the plant commensal Pseudomonas fluorescens Pf-5.</title>
        <authorList>
            <person name="Paulsen I.T."/>
            <person name="Press C.M."/>
            <person name="Ravel J."/>
            <person name="Kobayashi D.Y."/>
            <person name="Myers G.S.A."/>
            <person name="Mavrodi D.V."/>
            <person name="DeBoy R.T."/>
            <person name="Seshadri R."/>
            <person name="Ren Q."/>
            <person name="Madupu R."/>
            <person name="Dodson R.J."/>
            <person name="Durkin A.S."/>
            <person name="Brinkac L.M."/>
            <person name="Daugherty S.C."/>
            <person name="Sullivan S.A."/>
            <person name="Rosovitz M.J."/>
            <person name="Gwinn M.L."/>
            <person name="Zhou L."/>
            <person name="Schneider D.J."/>
            <person name="Cartinhour S.W."/>
            <person name="Nelson W.C."/>
            <person name="Weidman J."/>
            <person name="Watkins K."/>
            <person name="Tran K."/>
            <person name="Khouri H."/>
            <person name="Pierson E.A."/>
            <person name="Pierson L.S. III"/>
            <person name="Thomashow L.S."/>
            <person name="Loper J.E."/>
        </authorList>
    </citation>
    <scope>NUCLEOTIDE SEQUENCE [LARGE SCALE GENOMIC DNA]</scope>
    <source>
        <strain>ATCC BAA-477 / NRRL B-23932 / Pf-5</strain>
    </source>
</reference>
<protein>
    <recommendedName>
        <fullName evidence="1">RNA-binding protein Hfq</fullName>
    </recommendedName>
</protein>
<keyword id="KW-0694">RNA-binding</keyword>
<keyword id="KW-0346">Stress response</keyword>
<organism>
    <name type="scientific">Pseudomonas fluorescens (strain ATCC BAA-477 / NRRL B-23932 / Pf-5)</name>
    <dbReference type="NCBI Taxonomy" id="220664"/>
    <lineage>
        <taxon>Bacteria</taxon>
        <taxon>Pseudomonadati</taxon>
        <taxon>Pseudomonadota</taxon>
        <taxon>Gammaproteobacteria</taxon>
        <taxon>Pseudomonadales</taxon>
        <taxon>Pseudomonadaceae</taxon>
        <taxon>Pseudomonas</taxon>
    </lineage>
</organism>